<dbReference type="EMBL" id="AK031968">
    <property type="protein sequence ID" value="BAC27628.1"/>
    <property type="status" value="ALT_FRAME"/>
    <property type="molecule type" value="mRNA"/>
</dbReference>
<dbReference type="EMBL" id="BC086684">
    <property type="protein sequence ID" value="AAH86684.1"/>
    <property type="status" value="ALT_INIT"/>
    <property type="molecule type" value="mRNA"/>
</dbReference>
<dbReference type="EMBL" id="BC099679">
    <property type="protein sequence ID" value="AAH99679.1"/>
    <property type="molecule type" value="mRNA"/>
</dbReference>
<dbReference type="CCDS" id="CCDS83729.1"/>
<dbReference type="RefSeq" id="NP_001334053.1">
    <property type="nucleotide sequence ID" value="NM_001347124.2"/>
</dbReference>
<dbReference type="RefSeq" id="NP_898975.2">
    <property type="nucleotide sequence ID" value="NM_183152.4"/>
</dbReference>
<dbReference type="SMR" id="Q4FZD7"/>
<dbReference type="FunCoup" id="Q4FZD7">
    <property type="interactions" value="19"/>
</dbReference>
<dbReference type="STRING" id="10090.ENSMUSP00000044400"/>
<dbReference type="GlyGen" id="Q4FZD7">
    <property type="glycosylation" value="1 site"/>
</dbReference>
<dbReference type="PhosphoSitePlus" id="Q4FZD7"/>
<dbReference type="PaxDb" id="10090-ENSMUSP00000044400"/>
<dbReference type="ProteomicsDB" id="289687"/>
<dbReference type="Antibodypedia" id="64895">
    <property type="antibodies" value="176 antibodies from 28 providers"/>
</dbReference>
<dbReference type="DNASU" id="216166"/>
<dbReference type="Ensembl" id="ENSMUST00000105351.2">
    <property type="protein sequence ID" value="ENSMUSP00000100988.2"/>
    <property type="gene ID" value="ENSMUSG00000035486.15"/>
</dbReference>
<dbReference type="GeneID" id="216166"/>
<dbReference type="KEGG" id="mmu:216166"/>
<dbReference type="UCSC" id="uc007gcy.2">
    <property type="organism name" value="mouse"/>
</dbReference>
<dbReference type="AGR" id="MGI:3026984"/>
<dbReference type="CTD" id="126520"/>
<dbReference type="MGI" id="MGI:3026984">
    <property type="gene designation" value="Plk5"/>
</dbReference>
<dbReference type="VEuPathDB" id="HostDB:ENSMUSG00000035486"/>
<dbReference type="eggNOG" id="KOG0575">
    <property type="taxonomic scope" value="Eukaryota"/>
</dbReference>
<dbReference type="GeneTree" id="ENSGT00940000162321"/>
<dbReference type="InParanoid" id="Q4FZD7"/>
<dbReference type="OrthoDB" id="408964at2759"/>
<dbReference type="PhylomeDB" id="Q4FZD7"/>
<dbReference type="BRENDA" id="2.7.11.21">
    <property type="organism ID" value="3474"/>
</dbReference>
<dbReference type="BioGRID-ORCS" id="216166">
    <property type="hits" value="1 hit in 78 CRISPR screens"/>
</dbReference>
<dbReference type="PRO" id="PR:Q4FZD7"/>
<dbReference type="Proteomes" id="UP000000589">
    <property type="component" value="Chromosome 10"/>
</dbReference>
<dbReference type="RNAct" id="Q4FZD7">
    <property type="molecule type" value="protein"/>
</dbReference>
<dbReference type="Bgee" id="ENSMUSG00000035486">
    <property type="expression patterns" value="Expressed in retinal neural layer and 60 other cell types or tissues"/>
</dbReference>
<dbReference type="ExpressionAtlas" id="Q4FZD7">
    <property type="expression patterns" value="baseline and differential"/>
</dbReference>
<dbReference type="GO" id="GO:0005737">
    <property type="term" value="C:cytoplasm"/>
    <property type="evidence" value="ECO:0007669"/>
    <property type="project" value="UniProtKB-SubCell"/>
</dbReference>
<dbReference type="GO" id="GO:0005730">
    <property type="term" value="C:nucleolus"/>
    <property type="evidence" value="ECO:0000314"/>
    <property type="project" value="UniProtKB"/>
</dbReference>
<dbReference type="GO" id="GO:0005524">
    <property type="term" value="F:ATP binding"/>
    <property type="evidence" value="ECO:0007669"/>
    <property type="project" value="UniProtKB-KW"/>
</dbReference>
<dbReference type="GO" id="GO:0046872">
    <property type="term" value="F:metal ion binding"/>
    <property type="evidence" value="ECO:0007669"/>
    <property type="project" value="UniProtKB-KW"/>
</dbReference>
<dbReference type="GO" id="GO:0030154">
    <property type="term" value="P:cell differentiation"/>
    <property type="evidence" value="ECO:0007669"/>
    <property type="project" value="UniProtKB-KW"/>
</dbReference>
<dbReference type="GO" id="GO:0051301">
    <property type="term" value="P:cell division"/>
    <property type="evidence" value="ECO:0007669"/>
    <property type="project" value="UniProtKB-KW"/>
</dbReference>
<dbReference type="GO" id="GO:0002357">
    <property type="term" value="P:defense response to tumor cell"/>
    <property type="evidence" value="ECO:0000314"/>
    <property type="project" value="UniProtKB"/>
</dbReference>
<dbReference type="GO" id="GO:0006974">
    <property type="term" value="P:DNA damage response"/>
    <property type="evidence" value="ECO:0000314"/>
    <property type="project" value="UniProtKB"/>
</dbReference>
<dbReference type="GO" id="GO:0008285">
    <property type="term" value="P:negative regulation of cell population proliferation"/>
    <property type="evidence" value="ECO:0000314"/>
    <property type="project" value="UniProtKB"/>
</dbReference>
<dbReference type="GO" id="GO:0010976">
    <property type="term" value="P:positive regulation of neuron projection development"/>
    <property type="evidence" value="ECO:0000314"/>
    <property type="project" value="UniProtKB"/>
</dbReference>
<dbReference type="GO" id="GO:0042981">
    <property type="term" value="P:regulation of apoptotic process"/>
    <property type="evidence" value="ECO:0000315"/>
    <property type="project" value="UniProtKB"/>
</dbReference>
<dbReference type="GO" id="GO:2000045">
    <property type="term" value="P:regulation of G1/S transition of mitotic cell cycle"/>
    <property type="evidence" value="ECO:0000315"/>
    <property type="project" value="UniProtKB"/>
</dbReference>
<dbReference type="CDD" id="cd13118">
    <property type="entry name" value="POLO_box_1"/>
    <property type="match status" value="1"/>
</dbReference>
<dbReference type="CDD" id="cd14099">
    <property type="entry name" value="STKc_PLK"/>
    <property type="match status" value="1"/>
</dbReference>
<dbReference type="FunFam" id="1.10.510.10:FF:000189">
    <property type="entry name" value="Serine/threonine-protein kinase PLK"/>
    <property type="match status" value="1"/>
</dbReference>
<dbReference type="FunFam" id="3.30.1120.30:FF:000014">
    <property type="entry name" value="Serine/threonine-protein kinase PLK"/>
    <property type="match status" value="1"/>
</dbReference>
<dbReference type="FunFam" id="3.30.200.20:FF:000600">
    <property type="entry name" value="Serine/threonine-protein kinase PLK"/>
    <property type="match status" value="1"/>
</dbReference>
<dbReference type="Gene3D" id="3.30.200.20">
    <property type="entry name" value="Phosphorylase Kinase, domain 1"/>
    <property type="match status" value="1"/>
</dbReference>
<dbReference type="Gene3D" id="3.30.1120.30">
    <property type="entry name" value="POLO box domain"/>
    <property type="match status" value="2"/>
</dbReference>
<dbReference type="Gene3D" id="1.10.510.10">
    <property type="entry name" value="Transferase(Phosphotransferase) domain 1"/>
    <property type="match status" value="1"/>
</dbReference>
<dbReference type="InterPro" id="IPR011009">
    <property type="entry name" value="Kinase-like_dom_sf"/>
</dbReference>
<dbReference type="InterPro" id="IPR033701">
    <property type="entry name" value="POLO_box_1"/>
</dbReference>
<dbReference type="InterPro" id="IPR000959">
    <property type="entry name" value="POLO_box_dom"/>
</dbReference>
<dbReference type="InterPro" id="IPR036947">
    <property type="entry name" value="POLO_box_dom_sf"/>
</dbReference>
<dbReference type="InterPro" id="IPR000719">
    <property type="entry name" value="Prot_kinase_dom"/>
</dbReference>
<dbReference type="InterPro" id="IPR017441">
    <property type="entry name" value="Protein_kinase_ATP_BS"/>
</dbReference>
<dbReference type="InterPro" id="IPR008271">
    <property type="entry name" value="Ser/Thr_kinase_AS"/>
</dbReference>
<dbReference type="PANTHER" id="PTHR24345:SF43">
    <property type="entry name" value="INACTIVE SERINE_THREONINE-PROTEIN KINASE PLK5"/>
    <property type="match status" value="1"/>
</dbReference>
<dbReference type="PANTHER" id="PTHR24345">
    <property type="entry name" value="SERINE/THREONINE-PROTEIN KINASE PLK"/>
    <property type="match status" value="1"/>
</dbReference>
<dbReference type="Pfam" id="PF00069">
    <property type="entry name" value="Pkinase"/>
    <property type="match status" value="1"/>
</dbReference>
<dbReference type="Pfam" id="PF00659">
    <property type="entry name" value="POLO_box"/>
    <property type="match status" value="1"/>
</dbReference>
<dbReference type="SMART" id="SM00220">
    <property type="entry name" value="S_TKc"/>
    <property type="match status" value="1"/>
</dbReference>
<dbReference type="SUPFAM" id="SSF82615">
    <property type="entry name" value="Polo-box domain"/>
    <property type="match status" value="2"/>
</dbReference>
<dbReference type="SUPFAM" id="SSF56112">
    <property type="entry name" value="Protein kinase-like (PK-like)"/>
    <property type="match status" value="1"/>
</dbReference>
<dbReference type="PROSITE" id="PS50078">
    <property type="entry name" value="POLO_BOX"/>
    <property type="match status" value="2"/>
</dbReference>
<dbReference type="PROSITE" id="PS00107">
    <property type="entry name" value="PROTEIN_KINASE_ATP"/>
    <property type="match status" value="1"/>
</dbReference>
<dbReference type="PROSITE" id="PS50011">
    <property type="entry name" value="PROTEIN_KINASE_DOM"/>
    <property type="match status" value="1"/>
</dbReference>
<dbReference type="PROSITE" id="PS00108">
    <property type="entry name" value="PROTEIN_KINASE_ST"/>
    <property type="match status" value="1"/>
</dbReference>
<proteinExistence type="evidence at protein level"/>
<organism>
    <name type="scientific">Mus musculus</name>
    <name type="common">Mouse</name>
    <dbReference type="NCBI Taxonomy" id="10090"/>
    <lineage>
        <taxon>Eukaryota</taxon>
        <taxon>Metazoa</taxon>
        <taxon>Chordata</taxon>
        <taxon>Craniata</taxon>
        <taxon>Vertebrata</taxon>
        <taxon>Euteleostomi</taxon>
        <taxon>Mammalia</taxon>
        <taxon>Eutheria</taxon>
        <taxon>Euarchontoglires</taxon>
        <taxon>Glires</taxon>
        <taxon>Rodentia</taxon>
        <taxon>Myomorpha</taxon>
        <taxon>Muroidea</taxon>
        <taxon>Muridae</taxon>
        <taxon>Murinae</taxon>
        <taxon>Mus</taxon>
        <taxon>Mus</taxon>
    </lineage>
</organism>
<comment type="function">
    <text evidence="8 9">Inactive serine/threonine-protein kinase that plays a role in cell cycle progression and neuronal differentiation.</text>
</comment>
<comment type="subcellular location">
    <subcellularLocation>
        <location evidence="8">Nucleus</location>
        <location evidence="8">Nucleolus</location>
    </subcellularLocation>
    <subcellularLocation>
        <location evidence="1">Cytoplasm</location>
    </subcellularLocation>
</comment>
<comment type="tissue specificity">
    <text>Expressed in the cerebellum, eye and brain cortex (at protein level). Expressed in highly differentiated tissues, such as brain, eyes and ovary. Not detectable in proliferating tissues, such as the colon, spleen and placenta.</text>
</comment>
<comment type="induction">
    <text evidence="8 9">Down-regulated in proliferating cells or in serum-stimulated cells or growth factors. Up-regulated in asynchronous cells, or upon serum deprivation or following stress inducible DNA damage treatment.</text>
</comment>
<comment type="domain">
    <text evidence="5">The protein kinase domain is predicted to be catalytically inactive; has lost the main activatory autophosphorylation site and the conserved key residues involved in phospho-substrate. The C-terminal region (containing the POLO box domain) is sufficient for inducing cell cycle arrest (By similarity).</text>
</comment>
<comment type="similarity">
    <text evidence="5">Belongs to the protein kinase superfamily. Ser/Thr protein kinase family. CDC5/Polo subfamily.</text>
</comment>
<comment type="sequence caution" evidence="10">
    <conflict type="erroneous initiation">
        <sequence resource="EMBL-CDS" id="AAH86684"/>
    </conflict>
    <text>Truncated N-terminus.</text>
</comment>
<comment type="sequence caution" evidence="10">
    <conflict type="frameshift">
        <sequence resource="EMBL-CDS" id="BAC27628"/>
    </conflict>
</comment>
<protein>
    <recommendedName>
        <fullName>Inactive serine/threonine-protein kinase PLK5</fullName>
    </recommendedName>
    <alternativeName>
        <fullName>Polo-like kinase 5</fullName>
        <shortName>PLK-5</shortName>
    </alternativeName>
</protein>
<keyword id="KW-0067">ATP-binding</keyword>
<keyword id="KW-0131">Cell cycle</keyword>
<keyword id="KW-0132">Cell division</keyword>
<keyword id="KW-0963">Cytoplasm</keyword>
<keyword id="KW-0221">Differentiation</keyword>
<keyword id="KW-0460">Magnesium</keyword>
<keyword id="KW-0479">Metal-binding</keyword>
<keyword id="KW-0547">Nucleotide-binding</keyword>
<keyword id="KW-0539">Nucleus</keyword>
<keyword id="KW-1185">Reference proteome</keyword>
<accession>Q4FZD7</accession>
<accession>Q0VGS4</accession>
<accession>Q8C096</accession>
<sequence length="595" mass="66055">MEPRSRRRRSRQLVATFLRDPGSGRVYRRGKLIGKGAFSRCYKLTDMSTSAVFALKVVPRGGAGRLRLRGKVEREIALHSRLRHRNIVAFHAHFADRDHVYMVLEYCSRQSLAHVLKVRRTLTEPEVRYYLRGLVSGLRYLHQQRIVHRDLKPSNFFLNKNMEVKIGDLGLAARVGPAGRCHRVLCGTPNFQAPEVVSRNGHSCKSDIWALGCIMYTVLTGTPPFAAAPLSEMYQNIRDGHYLEPTHLSPSARSLIARLLAPDPAERPSLDHLLQDDFFSQGFTPERLPPHSCHSPPVFAFPPPLGRLFRKVGQLLLTQCRPPCPFTSKEASGPGEEGTEPDHMEAGNEERDPLCTEGRIHLLTLGTPRTGLAGPKGSLALQLEVATRKLFLCLDAGPMAGQDPPGEQRPVLWAPKWVDYSLKYGFGYQLSDGGSGVLFRDGSHMALRPQGGHVSYQPDQGTLWTFTLRDVPSPLRAKLAVLRLFACYMQRRLREEGTVPMPATPASPDISLLSFIADSQAMVMLFSNGTVQVSLKTSQTQLVLSGEDEDLLLTLQEPGGPAVGVSYTLDVLRSHGFTLAVHHHLRHGLHLLQSV</sequence>
<reference evidence="10 12" key="1">
    <citation type="journal article" date="2005" name="Science">
        <title>The transcriptional landscape of the mammalian genome.</title>
        <authorList>
            <person name="Carninci P."/>
            <person name="Kasukawa T."/>
            <person name="Katayama S."/>
            <person name="Gough J."/>
            <person name="Frith M.C."/>
            <person name="Maeda N."/>
            <person name="Oyama R."/>
            <person name="Ravasi T."/>
            <person name="Lenhard B."/>
            <person name="Wells C."/>
            <person name="Kodzius R."/>
            <person name="Shimokawa K."/>
            <person name="Bajic V.B."/>
            <person name="Brenner S.E."/>
            <person name="Batalov S."/>
            <person name="Forrest A.R."/>
            <person name="Zavolan M."/>
            <person name="Davis M.J."/>
            <person name="Wilming L.G."/>
            <person name="Aidinis V."/>
            <person name="Allen J.E."/>
            <person name="Ambesi-Impiombato A."/>
            <person name="Apweiler R."/>
            <person name="Aturaliya R.N."/>
            <person name="Bailey T.L."/>
            <person name="Bansal M."/>
            <person name="Baxter L."/>
            <person name="Beisel K.W."/>
            <person name="Bersano T."/>
            <person name="Bono H."/>
            <person name="Chalk A.M."/>
            <person name="Chiu K.P."/>
            <person name="Choudhary V."/>
            <person name="Christoffels A."/>
            <person name="Clutterbuck D.R."/>
            <person name="Crowe M.L."/>
            <person name="Dalla E."/>
            <person name="Dalrymple B.P."/>
            <person name="de Bono B."/>
            <person name="Della Gatta G."/>
            <person name="di Bernardo D."/>
            <person name="Down T."/>
            <person name="Engstrom P."/>
            <person name="Fagiolini M."/>
            <person name="Faulkner G."/>
            <person name="Fletcher C.F."/>
            <person name="Fukushima T."/>
            <person name="Furuno M."/>
            <person name="Futaki S."/>
            <person name="Gariboldi M."/>
            <person name="Georgii-Hemming P."/>
            <person name="Gingeras T.R."/>
            <person name="Gojobori T."/>
            <person name="Green R.E."/>
            <person name="Gustincich S."/>
            <person name="Harbers M."/>
            <person name="Hayashi Y."/>
            <person name="Hensch T.K."/>
            <person name="Hirokawa N."/>
            <person name="Hill D."/>
            <person name="Huminiecki L."/>
            <person name="Iacono M."/>
            <person name="Ikeo K."/>
            <person name="Iwama A."/>
            <person name="Ishikawa T."/>
            <person name="Jakt M."/>
            <person name="Kanapin A."/>
            <person name="Katoh M."/>
            <person name="Kawasawa Y."/>
            <person name="Kelso J."/>
            <person name="Kitamura H."/>
            <person name="Kitano H."/>
            <person name="Kollias G."/>
            <person name="Krishnan S.P."/>
            <person name="Kruger A."/>
            <person name="Kummerfeld S.K."/>
            <person name="Kurochkin I.V."/>
            <person name="Lareau L.F."/>
            <person name="Lazarevic D."/>
            <person name="Lipovich L."/>
            <person name="Liu J."/>
            <person name="Liuni S."/>
            <person name="McWilliam S."/>
            <person name="Madan Babu M."/>
            <person name="Madera M."/>
            <person name="Marchionni L."/>
            <person name="Matsuda H."/>
            <person name="Matsuzawa S."/>
            <person name="Miki H."/>
            <person name="Mignone F."/>
            <person name="Miyake S."/>
            <person name="Morris K."/>
            <person name="Mottagui-Tabar S."/>
            <person name="Mulder N."/>
            <person name="Nakano N."/>
            <person name="Nakauchi H."/>
            <person name="Ng P."/>
            <person name="Nilsson R."/>
            <person name="Nishiguchi S."/>
            <person name="Nishikawa S."/>
            <person name="Nori F."/>
            <person name="Ohara O."/>
            <person name="Okazaki Y."/>
            <person name="Orlando V."/>
            <person name="Pang K.C."/>
            <person name="Pavan W.J."/>
            <person name="Pavesi G."/>
            <person name="Pesole G."/>
            <person name="Petrovsky N."/>
            <person name="Piazza S."/>
            <person name="Reed J."/>
            <person name="Reid J.F."/>
            <person name="Ring B.Z."/>
            <person name="Ringwald M."/>
            <person name="Rost B."/>
            <person name="Ruan Y."/>
            <person name="Salzberg S.L."/>
            <person name="Sandelin A."/>
            <person name="Schneider C."/>
            <person name="Schoenbach C."/>
            <person name="Sekiguchi K."/>
            <person name="Semple C.A."/>
            <person name="Seno S."/>
            <person name="Sessa L."/>
            <person name="Sheng Y."/>
            <person name="Shibata Y."/>
            <person name="Shimada H."/>
            <person name="Shimada K."/>
            <person name="Silva D."/>
            <person name="Sinclair B."/>
            <person name="Sperling S."/>
            <person name="Stupka E."/>
            <person name="Sugiura K."/>
            <person name="Sultana R."/>
            <person name="Takenaka Y."/>
            <person name="Taki K."/>
            <person name="Tammoja K."/>
            <person name="Tan S.L."/>
            <person name="Tang S."/>
            <person name="Taylor M.S."/>
            <person name="Tegner J."/>
            <person name="Teichmann S.A."/>
            <person name="Ueda H.R."/>
            <person name="van Nimwegen E."/>
            <person name="Verardo R."/>
            <person name="Wei C.L."/>
            <person name="Yagi K."/>
            <person name="Yamanishi H."/>
            <person name="Zabarovsky E."/>
            <person name="Zhu S."/>
            <person name="Zimmer A."/>
            <person name="Hide W."/>
            <person name="Bult C."/>
            <person name="Grimmond S.M."/>
            <person name="Teasdale R.D."/>
            <person name="Liu E.T."/>
            <person name="Brusic V."/>
            <person name="Quackenbush J."/>
            <person name="Wahlestedt C."/>
            <person name="Mattick J.S."/>
            <person name="Hume D.A."/>
            <person name="Kai C."/>
            <person name="Sasaki D."/>
            <person name="Tomaru Y."/>
            <person name="Fukuda S."/>
            <person name="Kanamori-Katayama M."/>
            <person name="Suzuki M."/>
            <person name="Aoki J."/>
            <person name="Arakawa T."/>
            <person name="Iida J."/>
            <person name="Imamura K."/>
            <person name="Itoh M."/>
            <person name="Kato T."/>
            <person name="Kawaji H."/>
            <person name="Kawagashira N."/>
            <person name="Kawashima T."/>
            <person name="Kojima M."/>
            <person name="Kondo S."/>
            <person name="Konno H."/>
            <person name="Nakano K."/>
            <person name="Ninomiya N."/>
            <person name="Nishio T."/>
            <person name="Okada M."/>
            <person name="Plessy C."/>
            <person name="Shibata K."/>
            <person name="Shiraki T."/>
            <person name="Suzuki S."/>
            <person name="Tagami M."/>
            <person name="Waki K."/>
            <person name="Watahiki A."/>
            <person name="Okamura-Oho Y."/>
            <person name="Suzuki H."/>
            <person name="Kawai J."/>
            <person name="Hayashizaki Y."/>
        </authorList>
    </citation>
    <scope>NUCLEOTIDE SEQUENCE [LARGE SCALE MRNA]</scope>
    <source>
        <strain evidence="12">C57BL/6J</strain>
        <tissue evidence="12">Medulla oblongata</tissue>
    </source>
</reference>
<reference evidence="10 11" key="2">
    <citation type="journal article" date="2004" name="Genome Res.">
        <title>The status, quality, and expansion of the NIH full-length cDNA project: the Mammalian Gene Collection (MGC).</title>
        <authorList>
            <consortium name="The MGC Project Team"/>
        </authorList>
    </citation>
    <scope>NUCLEOTIDE SEQUENCE [LARGE SCALE MRNA]</scope>
    <source>
        <strain evidence="11">C57BL/6J</strain>
        <tissue evidence="11">Eye</tissue>
    </source>
</reference>
<reference key="3">
    <citation type="journal article" date="2010" name="Nucleic Acids Res.">
        <title>The novel mouse Polo-like kinase 5 responds to DNA damage and localizes in the nucleolus.</title>
        <authorList>
            <person name="Andrysik Z."/>
            <person name="Bernstein W.Z."/>
            <person name="Deng L."/>
            <person name="Myer D.L."/>
            <person name="Li Y.Q."/>
            <person name="Tischfield J.A."/>
            <person name="Stambrook P.J."/>
            <person name="Bahassi el M."/>
        </authorList>
    </citation>
    <scope>FUNCTION</scope>
    <scope>INDUCTION</scope>
    <scope>SUBCELLULAR LOCATION</scope>
</reference>
<reference key="4">
    <citation type="journal article" date="2011" name="Mol. Cell. Biol.">
        <title>Plk5, a polo box domain-only protein with specific roles in neuron differentiation and glioblastoma suppression.</title>
        <authorList>
            <person name="de Carcer G."/>
            <person name="Escobar B."/>
            <person name="Higuero A.M."/>
            <person name="Garcia L."/>
            <person name="Anson A."/>
            <person name="Perez G."/>
            <person name="Mollejo M."/>
            <person name="Manning G."/>
            <person name="Melendez B."/>
            <person name="Abad-Rodriguez J."/>
            <person name="Malumbres M."/>
        </authorList>
    </citation>
    <scope>FUNCTION</scope>
    <scope>INDUCTION</scope>
    <scope>MUTAGENESIS OF ASP-150 AND TRP-417</scope>
</reference>
<feature type="chain" id="PRO_0000274545" description="Inactive serine/threonine-protein kinase PLK5">
    <location>
        <begin position="1"/>
        <end position="595"/>
    </location>
</feature>
<feature type="domain" description="Protein kinase" evidence="5">
    <location>
        <begin position="27"/>
        <end position="279"/>
    </location>
</feature>
<feature type="domain" description="POLO box 1" evidence="4">
    <location>
        <begin position="413"/>
        <end position="491"/>
    </location>
</feature>
<feature type="domain" description="POLO box 2" evidence="4">
    <location>
        <begin position="509"/>
        <end position="595"/>
    </location>
</feature>
<feature type="region of interest" description="Disordered" evidence="7">
    <location>
        <begin position="326"/>
        <end position="350"/>
    </location>
</feature>
<feature type="compositionally biased region" description="Basic and acidic residues" evidence="7">
    <location>
        <begin position="340"/>
        <end position="350"/>
    </location>
</feature>
<feature type="active site" description="Proton acceptor" evidence="2 5 6">
    <location>
        <position position="150"/>
    </location>
</feature>
<feature type="binding site" evidence="2 5">
    <location>
        <begin position="33"/>
        <end position="41"/>
    </location>
    <ligand>
        <name>ATP</name>
        <dbReference type="ChEBI" id="CHEBI:30616"/>
    </ligand>
</feature>
<feature type="binding site" evidence="2 5">
    <location>
        <position position="56"/>
    </location>
    <ligand>
        <name>ATP</name>
        <dbReference type="ChEBI" id="CHEBI:30616"/>
    </ligand>
</feature>
<feature type="mutagenesis site" description="Induces cell cycle arrest and neurite differentiation." evidence="9">
    <original>D</original>
    <variation>A</variation>
    <location>
        <position position="150"/>
    </location>
</feature>
<feature type="mutagenesis site" description="Induces cell cycle arrest." evidence="9">
    <original>W</original>
    <variation>A</variation>
    <location>
        <position position="417"/>
    </location>
</feature>
<feature type="sequence conflict" description="In Ref. 1; BAC27628." evidence="10" ref="1">
    <original>V</original>
    <variation>D</variation>
    <location>
        <position position="523"/>
    </location>
</feature>
<name>PLK5_MOUSE</name>
<evidence type="ECO:0000250" key="1"/>
<evidence type="ECO:0000250" key="2">
    <source>
        <dbReference type="UniProtKB" id="Q13131"/>
    </source>
</evidence>
<evidence type="ECO:0000250" key="3">
    <source>
        <dbReference type="UniProtKB" id="Q64702"/>
    </source>
</evidence>
<evidence type="ECO:0000255" key="4">
    <source>
        <dbReference type="PROSITE-ProRule" id="PRU00154"/>
    </source>
</evidence>
<evidence type="ECO:0000255" key="5">
    <source>
        <dbReference type="PROSITE-ProRule" id="PRU00159"/>
    </source>
</evidence>
<evidence type="ECO:0000255" key="6">
    <source>
        <dbReference type="PROSITE-ProRule" id="PRU10027"/>
    </source>
</evidence>
<evidence type="ECO:0000256" key="7">
    <source>
        <dbReference type="SAM" id="MobiDB-lite"/>
    </source>
</evidence>
<evidence type="ECO:0000269" key="8">
    <source>
    </source>
</evidence>
<evidence type="ECO:0000269" key="9">
    <source>
    </source>
</evidence>
<evidence type="ECO:0000305" key="10"/>
<evidence type="ECO:0000312" key="11">
    <source>
        <dbReference type="EMBL" id="AAH99679.1"/>
    </source>
</evidence>
<evidence type="ECO:0000312" key="12">
    <source>
        <dbReference type="EMBL" id="BAC27628.1"/>
    </source>
</evidence>
<gene>
    <name evidence="3" type="primary">Plk5</name>
</gene>